<sequence length="265" mass="28830">MNNLYRDLAPVTEAAWAEIELEAARTFKRHIAGRRVVDVSDPGGPVTAAVSTGRLIDVKAPTNGVIAHLRASKPLVRLRVPFTLSRNEIDDVERGSKDSDWEPVKEAAKKLAFVEDRTIFEGYSAASIEGIRSASSNPALTLPEDPREIPDVISQALSELRLAGVDGPYSVLLSADVYTKVSETSDHGYPIREHLNRLVDGDIIWAPAIDGAFVLTTRGGDFDLQLGTDVAIGYASHDTDTVRLYLQETLTFLCYTAEASVALSH</sequence>
<organism>
    <name type="scientific">Mycobacterium tuberculosis (strain ATCC 25618 / H37Rv)</name>
    <dbReference type="NCBI Taxonomy" id="83332"/>
    <lineage>
        <taxon>Bacteria</taxon>
        <taxon>Bacillati</taxon>
        <taxon>Actinomycetota</taxon>
        <taxon>Actinomycetes</taxon>
        <taxon>Mycobacteriales</taxon>
        <taxon>Mycobacteriaceae</taxon>
        <taxon>Mycobacterium</taxon>
        <taxon>Mycobacterium tuberculosis complex</taxon>
    </lineage>
</organism>
<comment type="function">
    <text evidence="2 3 4 8">Shell component of a type 1 encapsulin nanocompartment in situ; its cargo protects against oxidative stress at low pH. In situ and in E.coli assembles into proteinaceous shells about 22 nm in diameter with 2.5 nm thick walls (PubMed:24855650, PubMed:34751132). Cargo proteins are targeted to the interior via their C-terminal extensions; empty intact shells can be isolated in E.coli in the absence of cargo protein. There are at least 4 possible cargo proteins, DyP (encoded in the same locus), FolB, BfrB and Rv1762c; DyP and Rv1762c have been identified in vivo (PubMed:24855650). Probably involved in protection against oxidative damage from the host immune response (Probable) (PubMed:34751132). A T-cell antigen found in bacterial culture cell filtrates, stimulates mouse immune response. Does not have detectable bacteriocin activity (PubMed:9596740).</text>
</comment>
<comment type="subunit">
    <text evidence="4 8">Multimeric (PubMed:9596740). The encapsulin nanocompartment is formed by 60 subunits (Probable). Monomers form pentamers which assemble to form shells. There are 12 pores where the pentamers meet as well as 3-fold axis channels and dimer channels; none are larger than 3-4 Angstroms in diameter. The N-terminus of the protein is inside the shell, the C-terminus is outside (Probable).</text>
</comment>
<comment type="subcellular location">
    <subcellularLocation>
        <location evidence="2">Encapsulin nanocompartment</location>
    </subcellularLocation>
    <subcellularLocation>
        <location evidence="4">Secreted</location>
    </subcellularLocation>
    <subcellularLocation>
        <location evidence="4">Cell membrane</location>
        <topology evidence="4">Peripheral membrane protein</topology>
    </subcellularLocation>
    <text evidence="1 3 4 9">Encapsulin microcompartments of this protein encapsulating DyP are found in situ (PubMed:34751132). Detected at low levels in short-term culture filtrate, the nanocompartment is very stable and may survive cell lysis, explaining its apparent secretion (Probable) (PubMed:9596740). Detected in infected host (mouse J774 cell line) exosomes (PubMed:20662102).</text>
</comment>
<comment type="PTM">
    <text evidence="4">The initiator methionine is partially removed. When isolated from culture filtrate isoelectric focusing gives 3 bands, none of which are glycosylated.</text>
</comment>
<comment type="disruption phenotype">
    <text evidence="3">A single enc deletion survives less well after 3 days in 2.5 mM H2O2, pH 4.5 (mimics growth in the phagolysosome). A double dyp-enc deletion mutant cannot produce encapsulin nanocompartments, cells are highly sensitive to H2O2 at pH 4.5, mutants exhibit significant dysregulation of redox homeostasis, survive less well in C57BL/6 mouse-derived bone marrow cells and are more sensitive to pyrazinamide treatment in infected BALB/C mice.</text>
</comment>
<comment type="miscellaneous">
    <text evidence="4">Stimulates a strong IFN-gamma response in memory immune C57BL/6J mouse spleen T cells, recognized by monoclonal antibody HYB 71-2.</text>
</comment>
<comment type="similarity">
    <text evidence="7">Belongs to the encapsulin family. Family 1 subfamily.</text>
</comment>
<gene>
    <name evidence="5" type="primary">enc</name>
    <name evidence="6" type="synonym">cfp29</name>
    <name type="ordered locus">Rv0798c</name>
</gene>
<feature type="chain" id="PRO_0000455313" description="Type 1 encapsulin shell protein">
    <location>
        <begin position="1"/>
        <end position="265"/>
    </location>
</feature>
<feature type="initiator methionine" description="Removed; alternate" evidence="4">
    <location>
        <position position="1"/>
    </location>
</feature>
<feature type="chain" id="PRO_0000455314" description="Type 1 encapsulin shell protein, N-terminally processed">
    <location>
        <begin position="2"/>
        <end position="265"/>
    </location>
</feature>
<feature type="sequence conflict" description="In Ref. 1; CAA73350." evidence="7" ref="1">
    <original>V</original>
    <variation>E</variation>
    <location>
        <position position="242"/>
    </location>
</feature>
<feature type="helix" evidence="11">
    <location>
        <begin position="6"/>
        <end position="8"/>
    </location>
</feature>
<feature type="helix" evidence="11">
    <location>
        <begin position="13"/>
        <end position="30"/>
    </location>
</feature>
<feature type="helix" evidence="11">
    <location>
        <begin position="33"/>
        <end position="35"/>
    </location>
</feature>
<feature type="strand" evidence="11">
    <location>
        <begin position="37"/>
        <end position="39"/>
    </location>
</feature>
<feature type="strand" evidence="11">
    <location>
        <begin position="49"/>
        <end position="57"/>
    </location>
</feature>
<feature type="strand" evidence="11">
    <location>
        <begin position="66"/>
        <end position="74"/>
    </location>
</feature>
<feature type="strand" evidence="11">
    <location>
        <begin position="76"/>
        <end position="85"/>
    </location>
</feature>
<feature type="helix" evidence="11">
    <location>
        <begin position="86"/>
        <end position="93"/>
    </location>
</feature>
<feature type="helix" evidence="11">
    <location>
        <begin position="102"/>
        <end position="120"/>
    </location>
</feature>
<feature type="helix" evidence="11">
    <location>
        <begin position="124"/>
        <end position="126"/>
    </location>
</feature>
<feature type="helix" evidence="11">
    <location>
        <begin position="131"/>
        <end position="134"/>
    </location>
</feature>
<feature type="helix" evidence="11">
    <location>
        <begin position="146"/>
        <end position="148"/>
    </location>
</feature>
<feature type="helix" evidence="11">
    <location>
        <begin position="149"/>
        <end position="162"/>
    </location>
</feature>
<feature type="strand" evidence="11">
    <location>
        <begin position="169"/>
        <end position="173"/>
    </location>
</feature>
<feature type="helix" evidence="11">
    <location>
        <begin position="175"/>
        <end position="183"/>
    </location>
</feature>
<feature type="helix" evidence="11">
    <location>
        <begin position="191"/>
        <end position="196"/>
    </location>
</feature>
<feature type="strand" evidence="11">
    <location>
        <begin position="203"/>
        <end position="205"/>
    </location>
</feature>
<feature type="strand" evidence="11">
    <location>
        <begin position="209"/>
        <end position="216"/>
    </location>
</feature>
<feature type="strand" evidence="11">
    <location>
        <begin position="218"/>
        <end position="237"/>
    </location>
</feature>
<feature type="strand" evidence="11">
    <location>
        <begin position="239"/>
        <end position="254"/>
    </location>
</feature>
<feature type="helix" evidence="11">
    <location>
        <begin position="257"/>
        <end position="259"/>
    </location>
</feature>
<feature type="strand" evidence="11">
    <location>
        <begin position="260"/>
        <end position="264"/>
    </location>
</feature>
<dbReference type="EMBL" id="Y12820">
    <property type="protein sequence ID" value="CAA73350.1"/>
    <property type="molecule type" value="Genomic_DNA"/>
</dbReference>
<dbReference type="EMBL" id="AL123456">
    <property type="protein sequence ID" value="CCP43546.1"/>
    <property type="molecule type" value="Genomic_DNA"/>
</dbReference>
<dbReference type="RefSeq" id="NP_215313.1">
    <property type="nucleotide sequence ID" value="NC_000962.3"/>
</dbReference>
<dbReference type="RefSeq" id="WP_003404092.1">
    <property type="nucleotide sequence ID" value="NZ_NVQJ01000064.1"/>
</dbReference>
<dbReference type="PDB" id="7P1T">
    <property type="method" value="EM"/>
    <property type="resolution" value="2.29 A"/>
    <property type="chains" value="A/AA/AB/B/BA/BB/C/CA/CB/D/DA/DB/E/EA/EB/F/FA/FB/G/GA/GB/H/HA/HB/I/IA/J/JA/K/KA=1-265"/>
</dbReference>
<dbReference type="PDB" id="7PHM">
    <property type="method" value="EM"/>
    <property type="resolution" value="2.20 A"/>
    <property type="chains" value="0/1/2/3/4/5/6/7/A/B/C/D/E/F/G/H/I/J/K/L/M/N/O/P/Q/R/S/T/U/V=1-265"/>
</dbReference>
<dbReference type="PDB" id="8IKA">
    <property type="method" value="EM"/>
    <property type="resolution" value="2.75 A"/>
    <property type="chains" value="A1/A2/A3/A4/A5/A6/A7/A8/A9/AA/AB/AC/AD/AE/AF/AG/AH/AI/AJ/AK/AL/AM/AN/AO/AP/AQ/AR/AS/AT/AU=1-265"/>
</dbReference>
<dbReference type="PDB" id="8PYS">
    <property type="method" value="EM"/>
    <property type="resolution" value="2.70 A"/>
    <property type="chains" value="0/1/2/3/4/5/6/7/A/B/C/D/E/F/G/H/I/J/K/L/M/N/O/P/Q/R/S/T/U/V=1-265"/>
</dbReference>
<dbReference type="PDB" id="9BKX">
    <property type="method" value="X-ray"/>
    <property type="resolution" value="3.15 A"/>
    <property type="chains" value="A/B/C/D/E/F/G/H/I/J/K/L/M/N/O/P/Q/R/S/T=1-265"/>
</dbReference>
<dbReference type="PDB" id="9GOT">
    <property type="method" value="EM"/>
    <property type="resolution" value="5.42 A"/>
    <property type="chains" value="A/AB/BA/CA/D/DA/DB/E/EA/FA/FB/G/GA/GB/H/HA/HB/I/IA/JA/K/KA/L/LA/M/MA/N/NA/O/OA=1-265"/>
</dbReference>
<dbReference type="PDB" id="9HQ7">
    <property type="method" value="EM"/>
    <property type="resolution" value="4.51 A"/>
    <property type="chains" value="A/AB/B/BA/CA/CB/D/DA/DB/E/EA/F/FA/FB/G/GA/GB/H/HA/HB/I/IA/JA/K/KA/L/LA/M/MA/N=1-265"/>
</dbReference>
<dbReference type="PDB" id="9HQC">
    <property type="method" value="EM"/>
    <property type="resolution" value="4.57 A"/>
    <property type="chains" value="A/AB/BA/BB/C/CA/D/DA/DB/E/EA/F/FA/FB/G/GA/GB/H/HA/HB/I/IA/JA/K/KA/L/LA/M/MA/N=1-265"/>
</dbReference>
<dbReference type="PDBsum" id="7P1T"/>
<dbReference type="PDBsum" id="7PHM"/>
<dbReference type="PDBsum" id="8IKA"/>
<dbReference type="PDBsum" id="8PYS"/>
<dbReference type="PDBsum" id="9BKX"/>
<dbReference type="PDBsum" id="9GOT"/>
<dbReference type="PDBsum" id="9HQ7"/>
<dbReference type="PDBsum" id="9HQC"/>
<dbReference type="EMDB" id="EMD-13420"/>
<dbReference type="EMDB" id="EMD-18031"/>
<dbReference type="EMDB" id="EMD-35507"/>
<dbReference type="EMDB" id="EMD-51500"/>
<dbReference type="EMDB" id="EMD-52340"/>
<dbReference type="EMDB" id="EMD-52341"/>
<dbReference type="SMR" id="I6WZG6"/>
<dbReference type="STRING" id="83332.Rv0798c"/>
<dbReference type="MEROPS" id="U56.001"/>
<dbReference type="TCDB" id="1.S.6.1.2">
    <property type="family name" value="the bacterial/archaeal nanocompartment encapsulin shell protein1 (banc-sp1) family"/>
</dbReference>
<dbReference type="PaxDb" id="83332-Rv0798c"/>
<dbReference type="DNASU" id="885460"/>
<dbReference type="GeneID" id="885460"/>
<dbReference type="KEGG" id="mtu:Rv0798c"/>
<dbReference type="KEGG" id="mtv:RVBD_0798c"/>
<dbReference type="PATRIC" id="fig|83332.111.peg.885"/>
<dbReference type="TubercuList" id="Rv0798c"/>
<dbReference type="eggNOG" id="COG1659">
    <property type="taxonomic scope" value="Bacteria"/>
</dbReference>
<dbReference type="InParanoid" id="I6WZG6"/>
<dbReference type="OrthoDB" id="2922at2"/>
<dbReference type="PhylomeDB" id="I6WZG6"/>
<dbReference type="Proteomes" id="UP000001584">
    <property type="component" value="Chromosome"/>
</dbReference>
<dbReference type="GO" id="GO:0140737">
    <property type="term" value="C:encapsulin nanocompartment"/>
    <property type="evidence" value="ECO:0000314"/>
    <property type="project" value="UniProtKB"/>
</dbReference>
<dbReference type="GO" id="GO:0005576">
    <property type="term" value="C:extracellular region"/>
    <property type="evidence" value="ECO:0007669"/>
    <property type="project" value="UniProtKB-SubCell"/>
</dbReference>
<dbReference type="GO" id="GO:0005886">
    <property type="term" value="C:plasma membrane"/>
    <property type="evidence" value="ECO:0007669"/>
    <property type="project" value="UniProtKB-SubCell"/>
</dbReference>
<dbReference type="FunFam" id="3.30.2320.10:FF:000001">
    <property type="entry name" value="Bacteriocin CFP29"/>
    <property type="match status" value="1"/>
</dbReference>
<dbReference type="Gene3D" id="3.30.2400.30">
    <property type="match status" value="1"/>
</dbReference>
<dbReference type="Gene3D" id="3.30.2320.10">
    <property type="entry name" value="hypothetical protein PF0899 domain"/>
    <property type="match status" value="1"/>
</dbReference>
<dbReference type="InterPro" id="IPR007544">
    <property type="entry name" value="ENCAP"/>
</dbReference>
<dbReference type="InterPro" id="IPR051429">
    <property type="entry name" value="Encapsulin_nc"/>
</dbReference>
<dbReference type="NCBIfam" id="NF041155">
    <property type="entry name" value="encap_f1"/>
    <property type="match status" value="1"/>
</dbReference>
<dbReference type="PANTHER" id="PTHR37165">
    <property type="entry name" value="PEPTIDASE U56 FAMILY"/>
    <property type="match status" value="1"/>
</dbReference>
<dbReference type="PANTHER" id="PTHR37165:SF1">
    <property type="entry name" value="TYPE 1 ENCAPSULIN SHELL PROTEIN"/>
    <property type="match status" value="1"/>
</dbReference>
<dbReference type="Pfam" id="PF04454">
    <property type="entry name" value="Linocin_M18"/>
    <property type="match status" value="1"/>
</dbReference>
<dbReference type="PIRSF" id="PIRSF019254">
    <property type="entry name" value="CFP29"/>
    <property type="match status" value="1"/>
</dbReference>
<protein>
    <recommendedName>
        <fullName evidence="5">Type 1 encapsulin shell protein</fullName>
    </recommendedName>
    <alternativeName>
        <fullName evidence="6">Culture filtrate protein 29</fullName>
        <shortName evidence="6">CFP29</shortName>
    </alternativeName>
    <component>
        <recommendedName>
            <fullName>Type 1 encapsulin shell protein, N-terminally processed</fullName>
        </recommendedName>
    </component>
</protein>
<name>ENCAP_MYCTU</name>
<reference key="1">
    <citation type="journal article" date="1998" name="Infect. Immun.">
        <title>Identification and characterization of a 29-kilodalton protein from Mycobacterium tuberculosis culture filtrate recognized by mouse memory effector cells.</title>
        <authorList>
            <person name="Rosenkrands I."/>
            <person name="Rasmussen P.B."/>
            <person name="Carnio M."/>
            <person name="Jacobsen S."/>
            <person name="Theisen M."/>
            <person name="Andersen P."/>
        </authorList>
    </citation>
    <scope>NUCLEOTIDE SEQUENCE [GENOMIC DNA]</scope>
    <scope>PROTEIN SEQUENCE OF 1-19</scope>
    <scope>FUNCTION</scope>
    <scope>SUBUNIT</scope>
    <scope>SUBCELLULAR LOCATION</scope>
    <source>
        <strain>H37Rv</strain>
    </source>
</reference>
<reference key="2">
    <citation type="journal article" date="1998" name="Nature">
        <title>Deciphering the biology of Mycobacterium tuberculosis from the complete genome sequence.</title>
        <authorList>
            <person name="Cole S.T."/>
            <person name="Brosch R."/>
            <person name="Parkhill J."/>
            <person name="Garnier T."/>
            <person name="Churcher C.M."/>
            <person name="Harris D.E."/>
            <person name="Gordon S.V."/>
            <person name="Eiglmeier K."/>
            <person name="Gas S."/>
            <person name="Barry C.E. III"/>
            <person name="Tekaia F."/>
            <person name="Badcock K."/>
            <person name="Basham D."/>
            <person name="Brown D."/>
            <person name="Chillingworth T."/>
            <person name="Connor R."/>
            <person name="Davies R.M."/>
            <person name="Devlin K."/>
            <person name="Feltwell T."/>
            <person name="Gentles S."/>
            <person name="Hamlin N."/>
            <person name="Holroyd S."/>
            <person name="Hornsby T."/>
            <person name="Jagels K."/>
            <person name="Krogh A."/>
            <person name="McLean J."/>
            <person name="Moule S."/>
            <person name="Murphy L.D."/>
            <person name="Oliver S."/>
            <person name="Osborne J."/>
            <person name="Quail M.A."/>
            <person name="Rajandream M.A."/>
            <person name="Rogers J."/>
            <person name="Rutter S."/>
            <person name="Seeger K."/>
            <person name="Skelton S."/>
            <person name="Squares S."/>
            <person name="Squares R."/>
            <person name="Sulston J.E."/>
            <person name="Taylor K."/>
            <person name="Whitehead S."/>
            <person name="Barrell B.G."/>
        </authorList>
    </citation>
    <scope>NUCLEOTIDE SEQUENCE [LARGE SCALE GENOMIC DNA]</scope>
    <source>
        <strain>ATCC 25618 / H37Rv</strain>
    </source>
</reference>
<reference key="3">
    <citation type="journal article" date="2010" name="Proteomics">
        <title>Proteomic analysis identifies highly antigenic proteins in exosomes from M. tuberculosis-infected and culture filtrate protein-treated macrophages.</title>
        <authorList>
            <person name="Giri P.K."/>
            <person name="Kruh N.A."/>
            <person name="Dobos K.M."/>
            <person name="Schorey J.S."/>
        </authorList>
    </citation>
    <scope>SUBCELLULAR LOCATION</scope>
    <source>
        <strain>H37Rv</strain>
    </source>
</reference>
<reference evidence="10" key="4">
    <citation type="journal article" date="2011" name="Mol. Cell. Proteomics">
        <title>Proteogenomic analysis of Mycobacterium tuberculosis by high resolution mass spectrometry.</title>
        <authorList>
            <person name="Kelkar D.S."/>
            <person name="Kumar D."/>
            <person name="Kumar P."/>
            <person name="Balakrishnan L."/>
            <person name="Muthusamy B."/>
            <person name="Yadav A.K."/>
            <person name="Shrivastava P."/>
            <person name="Marimuthu A."/>
            <person name="Anand S."/>
            <person name="Sundaram H."/>
            <person name="Kingsbury R."/>
            <person name="Harsha H.C."/>
            <person name="Nair B."/>
            <person name="Prasad T.S."/>
            <person name="Chauhan D.S."/>
            <person name="Katoch K."/>
            <person name="Katoch V.M."/>
            <person name="Kumar P."/>
            <person name="Chaerkady R."/>
            <person name="Ramachandran S."/>
            <person name="Dash D."/>
            <person name="Pandey A."/>
        </authorList>
    </citation>
    <scope>IDENTIFICATION BY MASS SPECTROMETRY [LARGE SCALE ANALYSIS]</scope>
    <source>
        <strain>ATCC 25618 / H37Rv</strain>
    </source>
</reference>
<reference key="5">
    <citation type="journal article" date="2014" name="J. Biol. Chem.">
        <title>Characterization of a Mycobacterium tuberculosis nanocompartment and its potential cargo proteins.</title>
        <authorList>
            <person name="Contreras H."/>
            <person name="Joens M.S."/>
            <person name="McMath L.M."/>
            <person name="Le V.P."/>
            <person name="Tullius M.V."/>
            <person name="Kimmey J.M."/>
            <person name="Bionghi N."/>
            <person name="Horwitz M.A."/>
            <person name="Fitzpatrick J.A."/>
            <person name="Goulding C.W."/>
        </authorList>
    </citation>
    <scope>FUNCTION</scope>
    <scope>SUBUNIT</scope>
    <scope>SUBCELLULAR LOCATION</scope>
    <source>
        <strain>H37Rv</strain>
    </source>
</reference>
<reference key="6">
    <citation type="journal article" date="2021" name="Elife">
        <title>A nanocompartment system contributes to defense against oxidative stress in Mycobacterium tuberculosis.</title>
        <authorList>
            <person name="Lien K.A."/>
            <person name="Dinshaw K."/>
            <person name="Nichols R.J."/>
            <person name="Cassidy-Amstutz C."/>
            <person name="Knight M."/>
            <person name="Singh R."/>
            <person name="Eltis L.D."/>
            <person name="Savage D.F."/>
            <person name="Stanley S.A."/>
        </authorList>
    </citation>
    <scope>IDENTIFICATION BY MASS SPECTROMETRY</scope>
    <scope>FUNCTION</scope>
    <scope>SUBCELLULAR LOCATION</scope>
    <scope>DISRUPTION PHENOTYPE</scope>
    <source>
        <strain>H37Rv</strain>
    </source>
</reference>
<reference key="7">
    <citation type="journal article" date="2021" name="Nat. Commun.">
        <title>Large-scale computational discovery and analysis of virus-derived microbial nanocompartments.</title>
        <authorList>
            <person name="Andreas M.P."/>
            <person name="Giessen T.W."/>
        </authorList>
    </citation>
    <scope>CLASSIFICATION</scope>
</reference>
<proteinExistence type="evidence at protein level"/>
<accession>I6WZG6</accession>
<accession>O07812</accession>
<evidence type="ECO:0000269" key="1">
    <source>
    </source>
</evidence>
<evidence type="ECO:0000269" key="2">
    <source>
    </source>
</evidence>
<evidence type="ECO:0000269" key="3">
    <source>
    </source>
</evidence>
<evidence type="ECO:0000269" key="4">
    <source>
    </source>
</evidence>
<evidence type="ECO:0000303" key="5">
    <source>
    </source>
</evidence>
<evidence type="ECO:0000303" key="6">
    <source>
    </source>
</evidence>
<evidence type="ECO:0000305" key="7"/>
<evidence type="ECO:0000305" key="8">
    <source>
    </source>
</evidence>
<evidence type="ECO:0000305" key="9">
    <source>
    </source>
</evidence>
<evidence type="ECO:0007744" key="10">
    <source>
    </source>
</evidence>
<evidence type="ECO:0007829" key="11">
    <source>
        <dbReference type="PDB" id="9BKX"/>
    </source>
</evidence>
<keyword id="KW-0002">3D-structure</keyword>
<keyword id="KW-1003">Cell membrane</keyword>
<keyword id="KW-0903">Direct protein sequencing</keyword>
<keyword id="KW-1284">Encapsulin nanocompartment</keyword>
<keyword id="KW-0472">Membrane</keyword>
<keyword id="KW-1185">Reference proteome</keyword>
<keyword id="KW-0964">Secreted</keyword>
<keyword id="KW-0843">Virulence</keyword>